<dbReference type="EC" id="2.7.7.6" evidence="1"/>
<dbReference type="EMBL" id="AM920689">
    <property type="protein sequence ID" value="CAP52800.1"/>
    <property type="molecule type" value="Genomic_DNA"/>
</dbReference>
<dbReference type="SMR" id="B0RU58"/>
<dbReference type="KEGG" id="xca:xcc-b100_3435"/>
<dbReference type="HOGENOM" id="CLU_053084_0_1_6"/>
<dbReference type="Proteomes" id="UP000001188">
    <property type="component" value="Chromosome"/>
</dbReference>
<dbReference type="GO" id="GO:0005737">
    <property type="term" value="C:cytoplasm"/>
    <property type="evidence" value="ECO:0007669"/>
    <property type="project" value="UniProtKB-ARBA"/>
</dbReference>
<dbReference type="GO" id="GO:0000428">
    <property type="term" value="C:DNA-directed RNA polymerase complex"/>
    <property type="evidence" value="ECO:0007669"/>
    <property type="project" value="UniProtKB-KW"/>
</dbReference>
<dbReference type="GO" id="GO:0003677">
    <property type="term" value="F:DNA binding"/>
    <property type="evidence" value="ECO:0007669"/>
    <property type="project" value="UniProtKB-UniRule"/>
</dbReference>
<dbReference type="GO" id="GO:0003899">
    <property type="term" value="F:DNA-directed RNA polymerase activity"/>
    <property type="evidence" value="ECO:0007669"/>
    <property type="project" value="UniProtKB-UniRule"/>
</dbReference>
<dbReference type="GO" id="GO:0046983">
    <property type="term" value="F:protein dimerization activity"/>
    <property type="evidence" value="ECO:0007669"/>
    <property type="project" value="InterPro"/>
</dbReference>
<dbReference type="GO" id="GO:0006351">
    <property type="term" value="P:DNA-templated transcription"/>
    <property type="evidence" value="ECO:0007669"/>
    <property type="project" value="UniProtKB-UniRule"/>
</dbReference>
<dbReference type="CDD" id="cd06928">
    <property type="entry name" value="RNAP_alpha_NTD"/>
    <property type="match status" value="1"/>
</dbReference>
<dbReference type="FunFam" id="1.10.150.20:FF:000001">
    <property type="entry name" value="DNA-directed RNA polymerase subunit alpha"/>
    <property type="match status" value="1"/>
</dbReference>
<dbReference type="FunFam" id="2.170.120.12:FF:000001">
    <property type="entry name" value="DNA-directed RNA polymerase subunit alpha"/>
    <property type="match status" value="1"/>
</dbReference>
<dbReference type="Gene3D" id="1.10.150.20">
    <property type="entry name" value="5' to 3' exonuclease, C-terminal subdomain"/>
    <property type="match status" value="1"/>
</dbReference>
<dbReference type="Gene3D" id="2.170.120.12">
    <property type="entry name" value="DNA-directed RNA polymerase, insert domain"/>
    <property type="match status" value="1"/>
</dbReference>
<dbReference type="Gene3D" id="3.30.1360.10">
    <property type="entry name" value="RNA polymerase, RBP11-like subunit"/>
    <property type="match status" value="1"/>
</dbReference>
<dbReference type="HAMAP" id="MF_00059">
    <property type="entry name" value="RNApol_bact_RpoA"/>
    <property type="match status" value="1"/>
</dbReference>
<dbReference type="InterPro" id="IPR011262">
    <property type="entry name" value="DNA-dir_RNA_pol_insert"/>
</dbReference>
<dbReference type="InterPro" id="IPR011263">
    <property type="entry name" value="DNA-dir_RNA_pol_RpoA/D/Rpb3"/>
</dbReference>
<dbReference type="InterPro" id="IPR011773">
    <property type="entry name" value="DNA-dir_RpoA"/>
</dbReference>
<dbReference type="InterPro" id="IPR036603">
    <property type="entry name" value="RBP11-like"/>
</dbReference>
<dbReference type="InterPro" id="IPR011260">
    <property type="entry name" value="RNAP_asu_C"/>
</dbReference>
<dbReference type="InterPro" id="IPR036643">
    <property type="entry name" value="RNApol_insert_sf"/>
</dbReference>
<dbReference type="NCBIfam" id="NF003513">
    <property type="entry name" value="PRK05182.1-2"/>
    <property type="match status" value="1"/>
</dbReference>
<dbReference type="NCBIfam" id="NF003519">
    <property type="entry name" value="PRK05182.2-5"/>
    <property type="match status" value="1"/>
</dbReference>
<dbReference type="NCBIfam" id="TIGR02027">
    <property type="entry name" value="rpoA"/>
    <property type="match status" value="1"/>
</dbReference>
<dbReference type="Pfam" id="PF01000">
    <property type="entry name" value="RNA_pol_A_bac"/>
    <property type="match status" value="1"/>
</dbReference>
<dbReference type="Pfam" id="PF03118">
    <property type="entry name" value="RNA_pol_A_CTD"/>
    <property type="match status" value="1"/>
</dbReference>
<dbReference type="Pfam" id="PF01193">
    <property type="entry name" value="RNA_pol_L"/>
    <property type="match status" value="1"/>
</dbReference>
<dbReference type="SMART" id="SM00662">
    <property type="entry name" value="RPOLD"/>
    <property type="match status" value="1"/>
</dbReference>
<dbReference type="SUPFAM" id="SSF47789">
    <property type="entry name" value="C-terminal domain of RNA polymerase alpha subunit"/>
    <property type="match status" value="1"/>
</dbReference>
<dbReference type="SUPFAM" id="SSF56553">
    <property type="entry name" value="Insert subdomain of RNA polymerase alpha subunit"/>
    <property type="match status" value="1"/>
</dbReference>
<dbReference type="SUPFAM" id="SSF55257">
    <property type="entry name" value="RBP11-like subunits of RNA polymerase"/>
    <property type="match status" value="1"/>
</dbReference>
<reference key="1">
    <citation type="journal article" date="2008" name="J. Biotechnol.">
        <title>The genome of Xanthomonas campestris pv. campestris B100 and its use for the reconstruction of metabolic pathways involved in xanthan biosynthesis.</title>
        <authorList>
            <person name="Vorhoelter F.-J."/>
            <person name="Schneiker S."/>
            <person name="Goesmann A."/>
            <person name="Krause L."/>
            <person name="Bekel T."/>
            <person name="Kaiser O."/>
            <person name="Linke B."/>
            <person name="Patschkowski T."/>
            <person name="Rueckert C."/>
            <person name="Schmid J."/>
            <person name="Sidhu V.K."/>
            <person name="Sieber V."/>
            <person name="Tauch A."/>
            <person name="Watt S.A."/>
            <person name="Weisshaar B."/>
            <person name="Becker A."/>
            <person name="Niehaus K."/>
            <person name="Puehler A."/>
        </authorList>
    </citation>
    <scope>NUCLEOTIDE SEQUENCE [LARGE SCALE GENOMIC DNA]</scope>
    <source>
        <strain>B100</strain>
    </source>
</reference>
<evidence type="ECO:0000255" key="1">
    <source>
        <dbReference type="HAMAP-Rule" id="MF_00059"/>
    </source>
</evidence>
<protein>
    <recommendedName>
        <fullName evidence="1">DNA-directed RNA polymerase subunit alpha</fullName>
        <shortName evidence="1">RNAP subunit alpha</shortName>
        <ecNumber evidence="1">2.7.7.6</ecNumber>
    </recommendedName>
    <alternativeName>
        <fullName evidence="1">RNA polymerase subunit alpha</fullName>
    </alternativeName>
    <alternativeName>
        <fullName evidence="1">Transcriptase subunit alpha</fullName>
    </alternativeName>
</protein>
<proteinExistence type="inferred from homology"/>
<name>RPOA_XANCB</name>
<sequence length="332" mass="36364">MTVTANQVLRPRGPQIERLTDNRAKVVIEPLERGYGHTLGNALRRVLLSSIPGFAITEVEIDGVLHEYTTVEGLQEDVLDVLLNLKDVAIRMHSGDSATLSLSKQGPGTVTAADIRTDHNVEIINGDHVICHLTKDTALNMRLKIERGFGYQPAAARRRPDEETRTIGRLMLDASFSPVRRVAYAVEAARVEQRTDLDKLVIDIETNGTIDAEEAVRTAADILSDQLSVFGDFTHRDRGAAKPAASGVDPVLLRPIDDLELTVRSANCLKAESIYYIGDLIQKTEVELLKTPNLGKKSLTEIKEVLAQRGLALGMKLENWPPAGVAQHGMLG</sequence>
<gene>
    <name evidence="1" type="primary">rpoA</name>
    <name type="ordered locus">xcc-b100_3435</name>
</gene>
<keyword id="KW-0240">DNA-directed RNA polymerase</keyword>
<keyword id="KW-0548">Nucleotidyltransferase</keyword>
<keyword id="KW-0804">Transcription</keyword>
<keyword id="KW-0808">Transferase</keyword>
<comment type="function">
    <text evidence="1">DNA-dependent RNA polymerase catalyzes the transcription of DNA into RNA using the four ribonucleoside triphosphates as substrates.</text>
</comment>
<comment type="catalytic activity">
    <reaction evidence="1">
        <text>RNA(n) + a ribonucleoside 5'-triphosphate = RNA(n+1) + diphosphate</text>
        <dbReference type="Rhea" id="RHEA:21248"/>
        <dbReference type="Rhea" id="RHEA-COMP:14527"/>
        <dbReference type="Rhea" id="RHEA-COMP:17342"/>
        <dbReference type="ChEBI" id="CHEBI:33019"/>
        <dbReference type="ChEBI" id="CHEBI:61557"/>
        <dbReference type="ChEBI" id="CHEBI:140395"/>
        <dbReference type="EC" id="2.7.7.6"/>
    </reaction>
</comment>
<comment type="subunit">
    <text evidence="1">Homodimer. The RNAP catalytic core consists of 2 alpha, 1 beta, 1 beta' and 1 omega subunit. When a sigma factor is associated with the core the holoenzyme is formed, which can initiate transcription.</text>
</comment>
<comment type="domain">
    <text evidence="1">The N-terminal domain is essential for RNAP assembly and basal transcription, whereas the C-terminal domain is involved in interaction with transcriptional regulators and with upstream promoter elements.</text>
</comment>
<comment type="similarity">
    <text evidence="1">Belongs to the RNA polymerase alpha chain family.</text>
</comment>
<accession>B0RU58</accession>
<organism>
    <name type="scientific">Xanthomonas campestris pv. campestris (strain B100)</name>
    <dbReference type="NCBI Taxonomy" id="509169"/>
    <lineage>
        <taxon>Bacteria</taxon>
        <taxon>Pseudomonadati</taxon>
        <taxon>Pseudomonadota</taxon>
        <taxon>Gammaproteobacteria</taxon>
        <taxon>Lysobacterales</taxon>
        <taxon>Lysobacteraceae</taxon>
        <taxon>Xanthomonas</taxon>
    </lineage>
</organism>
<feature type="chain" id="PRO_1000091974" description="DNA-directed RNA polymerase subunit alpha">
    <location>
        <begin position="1"/>
        <end position="332"/>
    </location>
</feature>
<feature type="region of interest" description="Alpha N-terminal domain (alpha-NTD)" evidence="1">
    <location>
        <begin position="1"/>
        <end position="234"/>
    </location>
</feature>
<feature type="region of interest" description="Alpha C-terminal domain (alpha-CTD)" evidence="1">
    <location>
        <begin position="248"/>
        <end position="332"/>
    </location>
</feature>